<gene>
    <name evidence="1" type="primary">epd</name>
    <name type="ordered locus">VSAL_I0555</name>
</gene>
<accession>B6EMW1</accession>
<reference key="1">
    <citation type="journal article" date="2008" name="BMC Genomics">
        <title>The genome sequence of the fish pathogen Aliivibrio salmonicida strain LFI1238 shows extensive evidence of gene decay.</title>
        <authorList>
            <person name="Hjerde E."/>
            <person name="Lorentzen M.S."/>
            <person name="Holden M.T."/>
            <person name="Seeger K."/>
            <person name="Paulsen S."/>
            <person name="Bason N."/>
            <person name="Churcher C."/>
            <person name="Harris D."/>
            <person name="Norbertczak H."/>
            <person name="Quail M.A."/>
            <person name="Sanders S."/>
            <person name="Thurston S."/>
            <person name="Parkhill J."/>
            <person name="Willassen N.P."/>
            <person name="Thomson N.R."/>
        </authorList>
    </citation>
    <scope>NUCLEOTIDE SEQUENCE [LARGE SCALE GENOMIC DNA]</scope>
    <source>
        <strain>LFI1238</strain>
    </source>
</reference>
<proteinExistence type="inferred from homology"/>
<feature type="chain" id="PRO_1000186815" description="D-erythrose-4-phosphate dehydrogenase">
    <location>
        <begin position="1"/>
        <end position="339"/>
    </location>
</feature>
<feature type="active site" description="Nucleophile" evidence="1">
    <location>
        <position position="159"/>
    </location>
</feature>
<feature type="binding site" evidence="1">
    <location>
        <begin position="11"/>
        <end position="12"/>
    </location>
    <ligand>
        <name>NAD(+)</name>
        <dbReference type="ChEBI" id="CHEBI:57540"/>
    </ligand>
</feature>
<feature type="binding site" evidence="1">
    <location>
        <begin position="158"/>
        <end position="160"/>
    </location>
    <ligand>
        <name>substrate</name>
    </ligand>
</feature>
<feature type="binding site" evidence="1">
    <location>
        <position position="204"/>
    </location>
    <ligand>
        <name>substrate</name>
    </ligand>
</feature>
<feature type="binding site" evidence="1">
    <location>
        <begin position="217"/>
        <end position="218"/>
    </location>
    <ligand>
        <name>substrate</name>
    </ligand>
</feature>
<feature type="binding site" evidence="1">
    <location>
        <position position="240"/>
    </location>
    <ligand>
        <name>substrate</name>
    </ligand>
</feature>
<feature type="binding site" evidence="1">
    <location>
        <position position="322"/>
    </location>
    <ligand>
        <name>NAD(+)</name>
        <dbReference type="ChEBI" id="CHEBI:57540"/>
    </ligand>
</feature>
<feature type="site" description="Activates thiol group during catalysis" evidence="1">
    <location>
        <position position="186"/>
    </location>
</feature>
<protein>
    <recommendedName>
        <fullName evidence="1">D-erythrose-4-phosphate dehydrogenase</fullName>
        <shortName evidence="1">E4PDH</shortName>
        <ecNumber evidence="1">1.2.1.72</ecNumber>
    </recommendedName>
</protein>
<evidence type="ECO:0000255" key="1">
    <source>
        <dbReference type="HAMAP-Rule" id="MF_01640"/>
    </source>
</evidence>
<sequence>MLRVAINGFGRIGRSVLRALYESGKRDQIEIVAVNELSQPEGMAHLLQYDSTHGRFLHKVTHDQEYLYIDLPNGSQDRIRIVHQADISLLPWQSLQVDLVLDCTGVYGSKADGERHIDAGAKKVLFSHPGSADLDNTIIYGVNHDTLLPEHRVVSNGSCTTNCIIPVIKAIDDAFGIESGTITTIHSAMNDQPVIDAYHTDLRRTRAASQSIIPVDTKLHKGIERIFPKFSNKFEAISVRVPTVNVTAMDLSVTINTNVKVNDINQTIVNASQCTLHNIVDYTEAPLVSIDFNHDPHSAIVDGSQTRVSNGHLVKMLVWCDNEWGFANRMLDTALVMKK</sequence>
<dbReference type="EC" id="1.2.1.72" evidence="1"/>
<dbReference type="EMBL" id="FM178379">
    <property type="protein sequence ID" value="CAQ78240.1"/>
    <property type="molecule type" value="Genomic_DNA"/>
</dbReference>
<dbReference type="RefSeq" id="WP_012549364.1">
    <property type="nucleotide sequence ID" value="NC_011312.1"/>
</dbReference>
<dbReference type="SMR" id="B6EMW1"/>
<dbReference type="KEGG" id="vsa:VSAL_I0555"/>
<dbReference type="eggNOG" id="COG0057">
    <property type="taxonomic scope" value="Bacteria"/>
</dbReference>
<dbReference type="HOGENOM" id="CLU_030140_0_2_6"/>
<dbReference type="UniPathway" id="UPA00244">
    <property type="reaction ID" value="UER00309"/>
</dbReference>
<dbReference type="Proteomes" id="UP000001730">
    <property type="component" value="Chromosome 1"/>
</dbReference>
<dbReference type="GO" id="GO:0005737">
    <property type="term" value="C:cytoplasm"/>
    <property type="evidence" value="ECO:0007669"/>
    <property type="project" value="UniProtKB-SubCell"/>
</dbReference>
<dbReference type="GO" id="GO:0048001">
    <property type="term" value="F:erythrose-4-phosphate dehydrogenase activity"/>
    <property type="evidence" value="ECO:0007669"/>
    <property type="project" value="UniProtKB-UniRule"/>
</dbReference>
<dbReference type="GO" id="GO:0051287">
    <property type="term" value="F:NAD binding"/>
    <property type="evidence" value="ECO:0007669"/>
    <property type="project" value="InterPro"/>
</dbReference>
<dbReference type="GO" id="GO:0042823">
    <property type="term" value="P:pyridoxal phosphate biosynthetic process"/>
    <property type="evidence" value="ECO:0007669"/>
    <property type="project" value="UniProtKB-UniRule"/>
</dbReference>
<dbReference type="GO" id="GO:0008615">
    <property type="term" value="P:pyridoxine biosynthetic process"/>
    <property type="evidence" value="ECO:0007669"/>
    <property type="project" value="UniProtKB-UniRule"/>
</dbReference>
<dbReference type="CDD" id="cd23937">
    <property type="entry name" value="GAPDH_C_E4PDH"/>
    <property type="match status" value="1"/>
</dbReference>
<dbReference type="CDD" id="cd17892">
    <property type="entry name" value="GAPDH_N_E4PDH"/>
    <property type="match status" value="1"/>
</dbReference>
<dbReference type="FunFam" id="3.30.360.10:FF:000007">
    <property type="entry name" value="D-erythrose-4-phosphate dehydrogenase"/>
    <property type="match status" value="1"/>
</dbReference>
<dbReference type="FunFam" id="3.40.50.720:FF:000001">
    <property type="entry name" value="Glyceraldehyde-3-phosphate dehydrogenase"/>
    <property type="match status" value="1"/>
</dbReference>
<dbReference type="Gene3D" id="3.30.360.10">
    <property type="entry name" value="Dihydrodipicolinate Reductase, domain 2"/>
    <property type="match status" value="1"/>
</dbReference>
<dbReference type="Gene3D" id="3.40.50.720">
    <property type="entry name" value="NAD(P)-binding Rossmann-like Domain"/>
    <property type="match status" value="1"/>
</dbReference>
<dbReference type="HAMAP" id="MF_01640">
    <property type="entry name" value="E4P_dehydrog"/>
    <property type="match status" value="1"/>
</dbReference>
<dbReference type="InterPro" id="IPR006422">
    <property type="entry name" value="E4P_DH_bac"/>
</dbReference>
<dbReference type="InterPro" id="IPR020831">
    <property type="entry name" value="GlycerAld/Erythrose_P_DH"/>
</dbReference>
<dbReference type="InterPro" id="IPR020829">
    <property type="entry name" value="GlycerAld_3-P_DH_cat"/>
</dbReference>
<dbReference type="InterPro" id="IPR020828">
    <property type="entry name" value="GlycerAld_3-P_DH_NAD(P)-bd"/>
</dbReference>
<dbReference type="InterPro" id="IPR036291">
    <property type="entry name" value="NAD(P)-bd_dom_sf"/>
</dbReference>
<dbReference type="NCBIfam" id="TIGR01532">
    <property type="entry name" value="E4PD_g-proteo"/>
    <property type="match status" value="1"/>
</dbReference>
<dbReference type="NCBIfam" id="NF010058">
    <property type="entry name" value="PRK13535.1"/>
    <property type="match status" value="1"/>
</dbReference>
<dbReference type="PANTHER" id="PTHR43148">
    <property type="entry name" value="GLYCERALDEHYDE-3-PHOSPHATE DEHYDROGENASE 2"/>
    <property type="match status" value="1"/>
</dbReference>
<dbReference type="Pfam" id="PF02800">
    <property type="entry name" value="Gp_dh_C"/>
    <property type="match status" value="1"/>
</dbReference>
<dbReference type="Pfam" id="PF00044">
    <property type="entry name" value="Gp_dh_N"/>
    <property type="match status" value="1"/>
</dbReference>
<dbReference type="PIRSF" id="PIRSF000149">
    <property type="entry name" value="GAP_DH"/>
    <property type="match status" value="1"/>
</dbReference>
<dbReference type="PRINTS" id="PR00078">
    <property type="entry name" value="G3PDHDRGNASE"/>
</dbReference>
<dbReference type="SMART" id="SM00846">
    <property type="entry name" value="Gp_dh_N"/>
    <property type="match status" value="1"/>
</dbReference>
<dbReference type="SUPFAM" id="SSF55347">
    <property type="entry name" value="Glyceraldehyde-3-phosphate dehydrogenase-like, C-terminal domain"/>
    <property type="match status" value="1"/>
</dbReference>
<dbReference type="SUPFAM" id="SSF51735">
    <property type="entry name" value="NAD(P)-binding Rossmann-fold domains"/>
    <property type="match status" value="1"/>
</dbReference>
<comment type="function">
    <text evidence="1">Catalyzes the NAD-dependent conversion of D-erythrose 4-phosphate to 4-phosphoerythronate.</text>
</comment>
<comment type="catalytic activity">
    <reaction evidence="1">
        <text>D-erythrose 4-phosphate + NAD(+) + H2O = 4-phospho-D-erythronate + NADH + 2 H(+)</text>
        <dbReference type="Rhea" id="RHEA:12056"/>
        <dbReference type="ChEBI" id="CHEBI:15377"/>
        <dbReference type="ChEBI" id="CHEBI:15378"/>
        <dbReference type="ChEBI" id="CHEBI:16897"/>
        <dbReference type="ChEBI" id="CHEBI:57540"/>
        <dbReference type="ChEBI" id="CHEBI:57945"/>
        <dbReference type="ChEBI" id="CHEBI:58766"/>
        <dbReference type="EC" id="1.2.1.72"/>
    </reaction>
</comment>
<comment type="pathway">
    <text evidence="1">Cofactor biosynthesis; pyridoxine 5'-phosphate biosynthesis; pyridoxine 5'-phosphate from D-erythrose 4-phosphate: step 1/5.</text>
</comment>
<comment type="subunit">
    <text evidence="1">Homotetramer.</text>
</comment>
<comment type="subcellular location">
    <subcellularLocation>
        <location evidence="1">Cytoplasm</location>
    </subcellularLocation>
</comment>
<comment type="similarity">
    <text evidence="1">Belongs to the glyceraldehyde-3-phosphate dehydrogenase family. Epd subfamily.</text>
</comment>
<keyword id="KW-0963">Cytoplasm</keyword>
<keyword id="KW-0520">NAD</keyword>
<keyword id="KW-0560">Oxidoreductase</keyword>
<keyword id="KW-0664">Pyridoxine biosynthesis</keyword>
<organism>
    <name type="scientific">Aliivibrio salmonicida (strain LFI1238)</name>
    <name type="common">Vibrio salmonicida (strain LFI1238)</name>
    <dbReference type="NCBI Taxonomy" id="316275"/>
    <lineage>
        <taxon>Bacteria</taxon>
        <taxon>Pseudomonadati</taxon>
        <taxon>Pseudomonadota</taxon>
        <taxon>Gammaproteobacteria</taxon>
        <taxon>Vibrionales</taxon>
        <taxon>Vibrionaceae</taxon>
        <taxon>Aliivibrio</taxon>
    </lineage>
</organism>
<name>E4PD_ALISL</name>